<protein>
    <recommendedName>
        <fullName evidence="1">Cytochrome b559 subunit alpha</fullName>
    </recommendedName>
    <alternativeName>
        <fullName evidence="1">PSII reaction center subunit V</fullName>
    </alternativeName>
</protein>
<gene>
    <name evidence="1" type="primary">psbE</name>
    <name type="ordered locus">cce_1307</name>
</gene>
<name>PSBE_CROS5</name>
<evidence type="ECO:0000255" key="1">
    <source>
        <dbReference type="HAMAP-Rule" id="MF_00642"/>
    </source>
</evidence>
<comment type="function">
    <text evidence="1">This b-type cytochrome is tightly associated with the reaction center of photosystem II (PSII). PSII is a light-driven water:plastoquinone oxidoreductase that uses light energy to abstract electrons from H(2)O, generating O(2) and a proton gradient subsequently used for ATP formation. It consists of a core antenna complex that captures photons, and an electron transfer chain that converts photonic excitation into a charge separation.</text>
</comment>
<comment type="cofactor">
    <cofactor evidence="1">
        <name>heme b</name>
        <dbReference type="ChEBI" id="CHEBI:60344"/>
    </cofactor>
    <text evidence="1">With its partner (PsbF) binds heme. PSII binds additional chlorophylls, carotenoids and specific lipids.</text>
</comment>
<comment type="subunit">
    <text evidence="1">Heterodimer of an alpha subunit and a beta subunit. PSII is composed of 1 copy each of membrane proteins PsbA, PsbB, PsbC, PsbD, PsbE, PsbF, PsbH, PsbI, PsbJ, PsbK, PsbL, PsbM, PsbT, PsbX, PsbY, PsbZ, Psb30/Ycf12, peripheral proteins PsbO, CyanoQ (PsbQ), PsbU, PsbV and a large number of cofactors. It forms dimeric complexes.</text>
</comment>
<comment type="subcellular location">
    <subcellularLocation>
        <location evidence="1">Cellular thylakoid membrane</location>
        <topology evidence="1">Single-pass membrane protein</topology>
    </subcellularLocation>
</comment>
<comment type="similarity">
    <text evidence="1">Belongs to the PsbE/PsbF family.</text>
</comment>
<dbReference type="EMBL" id="CP000806">
    <property type="protein sequence ID" value="ACB50657.1"/>
    <property type="molecule type" value="Genomic_DNA"/>
</dbReference>
<dbReference type="RefSeq" id="WP_009544128.1">
    <property type="nucleotide sequence ID" value="NC_010546.1"/>
</dbReference>
<dbReference type="SMR" id="B1WVS0"/>
<dbReference type="STRING" id="43989.cce_1307"/>
<dbReference type="KEGG" id="cyt:cce_1307"/>
<dbReference type="eggNOG" id="ENOG5032RR6">
    <property type="taxonomic scope" value="Bacteria"/>
</dbReference>
<dbReference type="HOGENOM" id="CLU_194095_0_0_3"/>
<dbReference type="OrthoDB" id="514620at2"/>
<dbReference type="Proteomes" id="UP000001203">
    <property type="component" value="Chromosome circular"/>
</dbReference>
<dbReference type="GO" id="GO:0009539">
    <property type="term" value="C:photosystem II reaction center"/>
    <property type="evidence" value="ECO:0007669"/>
    <property type="project" value="InterPro"/>
</dbReference>
<dbReference type="GO" id="GO:0031676">
    <property type="term" value="C:plasma membrane-derived thylakoid membrane"/>
    <property type="evidence" value="ECO:0007669"/>
    <property type="project" value="UniProtKB-SubCell"/>
</dbReference>
<dbReference type="GO" id="GO:0009055">
    <property type="term" value="F:electron transfer activity"/>
    <property type="evidence" value="ECO:0007669"/>
    <property type="project" value="UniProtKB-UniRule"/>
</dbReference>
<dbReference type="GO" id="GO:0020037">
    <property type="term" value="F:heme binding"/>
    <property type="evidence" value="ECO:0007669"/>
    <property type="project" value="InterPro"/>
</dbReference>
<dbReference type="GO" id="GO:0005506">
    <property type="term" value="F:iron ion binding"/>
    <property type="evidence" value="ECO:0007669"/>
    <property type="project" value="UniProtKB-UniRule"/>
</dbReference>
<dbReference type="GO" id="GO:0009767">
    <property type="term" value="P:photosynthetic electron transport chain"/>
    <property type="evidence" value="ECO:0007669"/>
    <property type="project" value="InterPro"/>
</dbReference>
<dbReference type="Gene3D" id="1.20.5.860">
    <property type="entry name" value="Photosystem II cytochrome b559, alpha subunit"/>
    <property type="match status" value="1"/>
</dbReference>
<dbReference type="HAMAP" id="MF_00642">
    <property type="entry name" value="PSII_PsbE"/>
    <property type="match status" value="1"/>
</dbReference>
<dbReference type="InterPro" id="IPR006217">
    <property type="entry name" value="PSII_cyt_b559_asu"/>
</dbReference>
<dbReference type="InterPro" id="IPR037025">
    <property type="entry name" value="PSII_cyt_b559_asu_sf"/>
</dbReference>
<dbReference type="InterPro" id="IPR006216">
    <property type="entry name" value="PSII_cyt_b559_CS"/>
</dbReference>
<dbReference type="InterPro" id="IPR013081">
    <property type="entry name" value="PSII_cyt_b559_N"/>
</dbReference>
<dbReference type="InterPro" id="IPR013082">
    <property type="entry name" value="PSII_cytb559_asu_lum"/>
</dbReference>
<dbReference type="NCBIfam" id="TIGR01332">
    <property type="entry name" value="cyt_b559_alpha"/>
    <property type="match status" value="1"/>
</dbReference>
<dbReference type="PANTHER" id="PTHR33391">
    <property type="entry name" value="CYTOCHROME B559 SUBUNIT BETA-RELATED"/>
    <property type="match status" value="1"/>
</dbReference>
<dbReference type="PANTHER" id="PTHR33391:SF9">
    <property type="entry name" value="CYTOCHROME B559 SUBUNIT BETA-RELATED"/>
    <property type="match status" value="1"/>
</dbReference>
<dbReference type="Pfam" id="PF00283">
    <property type="entry name" value="Cytochrom_B559"/>
    <property type="match status" value="1"/>
</dbReference>
<dbReference type="Pfam" id="PF00284">
    <property type="entry name" value="Cytochrom_B559a"/>
    <property type="match status" value="1"/>
</dbReference>
<dbReference type="PIRSF" id="PIRSF000036">
    <property type="entry name" value="PsbE"/>
    <property type="match status" value="1"/>
</dbReference>
<dbReference type="SUPFAM" id="SSF161045">
    <property type="entry name" value="Cytochrome b559 subunits"/>
    <property type="match status" value="1"/>
</dbReference>
<dbReference type="PROSITE" id="PS00537">
    <property type="entry name" value="CYTOCHROME_B559"/>
    <property type="match status" value="1"/>
</dbReference>
<accession>B1WVS0</accession>
<organism>
    <name type="scientific">Crocosphaera subtropica (strain ATCC 51142 / BH68)</name>
    <name type="common">Cyanothece sp. (strain ATCC 51142)</name>
    <dbReference type="NCBI Taxonomy" id="43989"/>
    <lineage>
        <taxon>Bacteria</taxon>
        <taxon>Bacillati</taxon>
        <taxon>Cyanobacteriota</taxon>
        <taxon>Cyanophyceae</taxon>
        <taxon>Oscillatoriophycideae</taxon>
        <taxon>Chroococcales</taxon>
        <taxon>Aphanothecaceae</taxon>
        <taxon>Crocosphaera</taxon>
        <taxon>Crocosphaera subtropica</taxon>
    </lineage>
</organism>
<keyword id="KW-0249">Electron transport</keyword>
<keyword id="KW-0349">Heme</keyword>
<keyword id="KW-0408">Iron</keyword>
<keyword id="KW-0472">Membrane</keyword>
<keyword id="KW-0479">Metal-binding</keyword>
<keyword id="KW-0602">Photosynthesis</keyword>
<keyword id="KW-0604">Photosystem II</keyword>
<keyword id="KW-1185">Reference proteome</keyword>
<keyword id="KW-0793">Thylakoid</keyword>
<keyword id="KW-0812">Transmembrane</keyword>
<keyword id="KW-1133">Transmembrane helix</keyword>
<keyword id="KW-0813">Transport</keyword>
<reference key="1">
    <citation type="journal article" date="2008" name="Proc. Natl. Acad. Sci. U.S.A.">
        <title>The genome of Cyanothece 51142, a unicellular diazotrophic cyanobacterium important in the marine nitrogen cycle.</title>
        <authorList>
            <person name="Welsh E.A."/>
            <person name="Liberton M."/>
            <person name="Stoeckel J."/>
            <person name="Loh T."/>
            <person name="Elvitigala T."/>
            <person name="Wang C."/>
            <person name="Wollam A."/>
            <person name="Fulton R.S."/>
            <person name="Clifton S.W."/>
            <person name="Jacobs J.M."/>
            <person name="Aurora R."/>
            <person name="Ghosh B.K."/>
            <person name="Sherman L.A."/>
            <person name="Smith R.D."/>
            <person name="Wilson R.K."/>
            <person name="Pakrasi H.B."/>
        </authorList>
    </citation>
    <scope>NUCLEOTIDE SEQUENCE [LARGE SCALE GENOMIC DNA]</scope>
    <source>
        <strain>ATCC 51142 / BH68</strain>
    </source>
</reference>
<sequence length="81" mass="9417">MSGVTGERPFSDIVTSIRYWVIHSITIPMLFIAGWLFVSTGLAYDVFGTPRPDEYFTQERQELPIIQDRFEAKNQITEFNK</sequence>
<feature type="chain" id="PRO_1000147428" description="Cytochrome b559 subunit alpha">
    <location>
        <begin position="1"/>
        <end position="81"/>
    </location>
</feature>
<feature type="transmembrane region" description="Helical" evidence="1">
    <location>
        <begin position="21"/>
        <end position="35"/>
    </location>
</feature>
<feature type="binding site" description="axial binding residue" evidence="1">
    <location>
        <position position="23"/>
    </location>
    <ligand>
        <name>heme</name>
        <dbReference type="ChEBI" id="CHEBI:30413"/>
        <note>ligand shared with beta subunit</note>
    </ligand>
    <ligandPart>
        <name>Fe</name>
        <dbReference type="ChEBI" id="CHEBI:18248"/>
    </ligandPart>
</feature>
<proteinExistence type="inferred from homology"/>